<dbReference type="EC" id="3.4.24.-" evidence="1"/>
<dbReference type="EMBL" id="AE006641">
    <property type="protein sequence ID" value="AAK42047.1"/>
    <property type="molecule type" value="Genomic_DNA"/>
</dbReference>
<dbReference type="PIR" id="H90348">
    <property type="entry name" value="H90348"/>
</dbReference>
<dbReference type="RefSeq" id="WP_009988523.1">
    <property type="nucleotide sequence ID" value="NC_002754.1"/>
</dbReference>
<dbReference type="FunCoup" id="Q97X95">
    <property type="interactions" value="81"/>
</dbReference>
<dbReference type="STRING" id="273057.SSO1859"/>
<dbReference type="PaxDb" id="273057-SSO1859"/>
<dbReference type="EnsemblBacteria" id="AAK42047">
    <property type="protein sequence ID" value="AAK42047"/>
    <property type="gene ID" value="SSO1859"/>
</dbReference>
<dbReference type="KEGG" id="sso:SSO1859"/>
<dbReference type="PATRIC" id="fig|273057.12.peg.1909"/>
<dbReference type="eggNOG" id="arCOG01331">
    <property type="taxonomic scope" value="Archaea"/>
</dbReference>
<dbReference type="HOGENOM" id="CLU_042266_4_1_2"/>
<dbReference type="InParanoid" id="Q97X95"/>
<dbReference type="PhylomeDB" id="Q97X95"/>
<dbReference type="Proteomes" id="UP000001974">
    <property type="component" value="Chromosome"/>
</dbReference>
<dbReference type="GO" id="GO:0005886">
    <property type="term" value="C:plasma membrane"/>
    <property type="evidence" value="ECO:0007669"/>
    <property type="project" value="UniProtKB-SubCell"/>
</dbReference>
<dbReference type="GO" id="GO:0004222">
    <property type="term" value="F:metalloendopeptidase activity"/>
    <property type="evidence" value="ECO:0007669"/>
    <property type="project" value="UniProtKB-UniRule"/>
</dbReference>
<dbReference type="GO" id="GO:0008270">
    <property type="term" value="F:zinc ion binding"/>
    <property type="evidence" value="ECO:0007669"/>
    <property type="project" value="UniProtKB-UniRule"/>
</dbReference>
<dbReference type="GO" id="GO:0006508">
    <property type="term" value="P:proteolysis"/>
    <property type="evidence" value="ECO:0007669"/>
    <property type="project" value="UniProtKB-KW"/>
</dbReference>
<dbReference type="CDD" id="cd07338">
    <property type="entry name" value="M48B_HtpX_like"/>
    <property type="match status" value="1"/>
</dbReference>
<dbReference type="Gene3D" id="3.30.2010.10">
    <property type="entry name" value="Metalloproteases ('zincins'), catalytic domain"/>
    <property type="match status" value="1"/>
</dbReference>
<dbReference type="HAMAP" id="MF_00188">
    <property type="entry name" value="Pept_M48_protease_HtpX"/>
    <property type="match status" value="1"/>
</dbReference>
<dbReference type="InterPro" id="IPR050083">
    <property type="entry name" value="HtpX_protease"/>
</dbReference>
<dbReference type="InterPro" id="IPR022919">
    <property type="entry name" value="Pept_M48_protease_HtpX"/>
</dbReference>
<dbReference type="InterPro" id="IPR001915">
    <property type="entry name" value="Peptidase_M48"/>
</dbReference>
<dbReference type="PANTHER" id="PTHR43221">
    <property type="entry name" value="PROTEASE HTPX"/>
    <property type="match status" value="1"/>
</dbReference>
<dbReference type="PANTHER" id="PTHR43221:SF2">
    <property type="entry name" value="PROTEASE HTPX HOMOLOG"/>
    <property type="match status" value="1"/>
</dbReference>
<dbReference type="Pfam" id="PF01435">
    <property type="entry name" value="Peptidase_M48"/>
    <property type="match status" value="1"/>
</dbReference>
<evidence type="ECO:0000255" key="1">
    <source>
        <dbReference type="HAMAP-Rule" id="MF_00188"/>
    </source>
</evidence>
<protein>
    <recommendedName>
        <fullName evidence="1">Protease HtpX homolog 1</fullName>
        <ecNumber evidence="1">3.4.24.-</ecNumber>
    </recommendedName>
</protein>
<organism>
    <name type="scientific">Saccharolobus solfataricus (strain ATCC 35092 / DSM 1617 / JCM 11322 / P2)</name>
    <name type="common">Sulfolobus solfataricus</name>
    <dbReference type="NCBI Taxonomy" id="273057"/>
    <lineage>
        <taxon>Archaea</taxon>
        <taxon>Thermoproteota</taxon>
        <taxon>Thermoprotei</taxon>
        <taxon>Sulfolobales</taxon>
        <taxon>Sulfolobaceae</taxon>
        <taxon>Saccharolobus</taxon>
    </lineage>
</organism>
<keyword id="KW-1003">Cell membrane</keyword>
<keyword id="KW-0378">Hydrolase</keyword>
<keyword id="KW-0472">Membrane</keyword>
<keyword id="KW-0479">Metal-binding</keyword>
<keyword id="KW-0482">Metalloprotease</keyword>
<keyword id="KW-0645">Protease</keyword>
<keyword id="KW-1185">Reference proteome</keyword>
<keyword id="KW-0812">Transmembrane</keyword>
<keyword id="KW-1133">Transmembrane helix</keyword>
<keyword id="KW-0862">Zinc</keyword>
<gene>
    <name evidence="1" type="primary">htpX1</name>
    <name type="synonym">htpX-1</name>
    <name type="ordered locus">SSO1859</name>
</gene>
<comment type="cofactor">
    <cofactor evidence="1">
        <name>Zn(2+)</name>
        <dbReference type="ChEBI" id="CHEBI:29105"/>
    </cofactor>
    <text evidence="1">Binds 1 zinc ion per subunit.</text>
</comment>
<comment type="subcellular location">
    <subcellularLocation>
        <location evidence="1">Cell membrane</location>
        <topology evidence="1">Multi-pass membrane protein</topology>
    </subcellularLocation>
</comment>
<comment type="similarity">
    <text evidence="1">Belongs to the peptidase M48B family.</text>
</comment>
<feature type="chain" id="PRO_0000138930" description="Protease HtpX homolog 1">
    <location>
        <begin position="1"/>
        <end position="311"/>
    </location>
</feature>
<feature type="transmembrane region" description="Helical" evidence="1">
    <location>
        <begin position="12"/>
        <end position="32"/>
    </location>
</feature>
<feature type="transmembrane region" description="Helical" evidence="1">
    <location>
        <begin position="35"/>
        <end position="55"/>
    </location>
</feature>
<feature type="transmembrane region" description="Helical" evidence="1">
    <location>
        <begin position="159"/>
        <end position="179"/>
    </location>
</feature>
<feature type="transmembrane region" description="Helical" evidence="1">
    <location>
        <begin position="184"/>
        <end position="204"/>
    </location>
</feature>
<feature type="active site" evidence="1">
    <location>
        <position position="138"/>
    </location>
</feature>
<feature type="binding site" evidence="1">
    <location>
        <position position="137"/>
    </location>
    <ligand>
        <name>Zn(2+)</name>
        <dbReference type="ChEBI" id="CHEBI:29105"/>
        <note>catalytic</note>
    </ligand>
</feature>
<feature type="binding site" evidence="1">
    <location>
        <position position="141"/>
    </location>
    <ligand>
        <name>Zn(2+)</name>
        <dbReference type="ChEBI" id="CHEBI:29105"/>
        <note>catalytic</note>
    </ligand>
</feature>
<feature type="binding site" evidence="1">
    <location>
        <position position="216"/>
    </location>
    <ligand>
        <name>Zn(2+)</name>
        <dbReference type="ChEBI" id="CHEBI:29105"/>
        <note>catalytic</note>
    </ligand>
</feature>
<accession>Q97X95</accession>
<name>HTPX1_SACS2</name>
<sequence>MDVRQRLISSMVISLGLTIISEGIVLIGIASLLHISLFFIFPALVIFWLFQWIISPYVVGRGGYEVSPNDPQYGWLYNLVRRIAEESKIKPPRVFVIDAPYPNAFAYGNRLGGMRVGITLPLLNILDVDELTAVIAHEVGHIKHRDVEIGMTIGLIPTVLGYISTLLMNFGYLALFLAADEIELLFAIAALAIGFVIFVVTFILQIFVLWFNRLRESYADYNSFLVLGEGSKALATALAKIEIYMQNIRIDPFTGIIVTAPPVKVEEKDPHLLVEQWLRTKVSAFKDILSTHPYPARRAQMIYRLIYGSNI</sequence>
<reference key="1">
    <citation type="journal article" date="2001" name="Proc. Natl. Acad. Sci. U.S.A.">
        <title>The complete genome of the crenarchaeon Sulfolobus solfataricus P2.</title>
        <authorList>
            <person name="She Q."/>
            <person name="Singh R.K."/>
            <person name="Confalonieri F."/>
            <person name="Zivanovic Y."/>
            <person name="Allard G."/>
            <person name="Awayez M.J."/>
            <person name="Chan-Weiher C.C.-Y."/>
            <person name="Clausen I.G."/>
            <person name="Curtis B.A."/>
            <person name="De Moors A."/>
            <person name="Erauso G."/>
            <person name="Fletcher C."/>
            <person name="Gordon P.M.K."/>
            <person name="Heikamp-de Jong I."/>
            <person name="Jeffries A.C."/>
            <person name="Kozera C.J."/>
            <person name="Medina N."/>
            <person name="Peng X."/>
            <person name="Thi-Ngoc H.P."/>
            <person name="Redder P."/>
            <person name="Schenk M.E."/>
            <person name="Theriault C."/>
            <person name="Tolstrup N."/>
            <person name="Charlebois R.L."/>
            <person name="Doolittle W.F."/>
            <person name="Duguet M."/>
            <person name="Gaasterland T."/>
            <person name="Garrett R.A."/>
            <person name="Ragan M.A."/>
            <person name="Sensen C.W."/>
            <person name="Van der Oost J."/>
        </authorList>
    </citation>
    <scope>NUCLEOTIDE SEQUENCE [LARGE SCALE GENOMIC DNA]</scope>
    <source>
        <strain>ATCC 35092 / DSM 1617 / JCM 11322 / P2</strain>
    </source>
</reference>
<proteinExistence type="inferred from homology"/>